<accession>P84080</accession>
<accession>A5D7F1</accession>
<accession>P10947</accession>
<accession>P32889</accession>
<accession>Q3SZG1</accession>
<gene>
    <name type="primary">ARF1</name>
</gene>
<feature type="initiator methionine" description="Removed" evidence="1">
    <location>
        <position position="1"/>
    </location>
</feature>
<feature type="chain" id="PRO_0000207377" description="ADP-ribosylation factor 1">
    <location>
        <begin position="2"/>
        <end position="181"/>
    </location>
</feature>
<feature type="region of interest" description="Important for the stable binding to the membranes" evidence="8">
    <location>
        <begin position="3"/>
        <end position="16"/>
    </location>
</feature>
<feature type="binding site" evidence="5 6 10 11 12 13">
    <location>
        <begin position="24"/>
        <end position="32"/>
    </location>
    <ligand>
        <name>GTP</name>
        <dbReference type="ChEBI" id="CHEBI:37565"/>
    </ligand>
</feature>
<feature type="binding site" evidence="5 6 10 11 12 13">
    <location>
        <begin position="126"/>
        <end position="129"/>
    </location>
    <ligand>
        <name>GTP</name>
        <dbReference type="ChEBI" id="CHEBI:37565"/>
    </ligand>
</feature>
<feature type="binding site" evidence="5 6 10 11 12 13">
    <location>
        <position position="160"/>
    </location>
    <ligand>
        <name>GTP</name>
        <dbReference type="ChEBI" id="CHEBI:37565"/>
    </ligand>
</feature>
<feature type="modified residue" description="N-acetylglycine; alternate" evidence="1">
    <location>
        <position position="2"/>
    </location>
</feature>
<feature type="lipid moiety-binding region" description="N-myristoyl glycine; alternate" evidence="1">
    <location>
        <position position="2"/>
    </location>
</feature>
<feature type="mutagenesis site" description="Mainly GTP-bound form; abolishes interaction with TMED10." evidence="4">
    <original>Q</original>
    <variation>L</variation>
    <location>
        <position position="71"/>
    </location>
</feature>
<feature type="helix" evidence="14">
    <location>
        <begin position="4"/>
        <end position="7"/>
    </location>
</feature>
<feature type="strand" evidence="15">
    <location>
        <begin position="19"/>
        <end position="23"/>
    </location>
</feature>
<feature type="helix" evidence="15">
    <location>
        <begin position="30"/>
        <end position="40"/>
    </location>
</feature>
<feature type="strand" evidence="14">
    <location>
        <begin position="49"/>
        <end position="51"/>
    </location>
</feature>
<feature type="strand" evidence="15">
    <location>
        <begin position="53"/>
        <end position="57"/>
    </location>
</feature>
<feature type="strand" evidence="15">
    <location>
        <begin position="62"/>
        <end position="67"/>
    </location>
</feature>
<feature type="helix" evidence="15">
    <location>
        <begin position="72"/>
        <end position="74"/>
    </location>
</feature>
<feature type="helix" evidence="15">
    <location>
        <begin position="75"/>
        <end position="81"/>
    </location>
</feature>
<feature type="turn" evidence="15">
    <location>
        <begin position="82"/>
        <end position="84"/>
    </location>
</feature>
<feature type="strand" evidence="15">
    <location>
        <begin position="86"/>
        <end position="93"/>
    </location>
</feature>
<feature type="helix" evidence="15">
    <location>
        <begin position="97"/>
        <end position="99"/>
    </location>
</feature>
<feature type="helix" evidence="15">
    <location>
        <begin position="100"/>
        <end position="111"/>
    </location>
</feature>
<feature type="helix" evidence="15">
    <location>
        <begin position="114"/>
        <end position="116"/>
    </location>
</feature>
<feature type="strand" evidence="15">
    <location>
        <begin position="120"/>
        <end position="126"/>
    </location>
</feature>
<feature type="helix" evidence="15">
    <location>
        <begin position="136"/>
        <end position="142"/>
    </location>
</feature>
<feature type="helix" evidence="15">
    <location>
        <begin position="145"/>
        <end position="147"/>
    </location>
</feature>
<feature type="strand" evidence="15">
    <location>
        <begin position="153"/>
        <end position="157"/>
    </location>
</feature>
<feature type="turn" evidence="15">
    <location>
        <begin position="160"/>
        <end position="163"/>
    </location>
</feature>
<feature type="helix" evidence="15">
    <location>
        <begin position="166"/>
        <end position="176"/>
    </location>
</feature>
<evidence type="ECO:0000250" key="1">
    <source>
        <dbReference type="UniProtKB" id="P84077"/>
    </source>
</evidence>
<evidence type="ECO:0000250" key="2">
    <source>
        <dbReference type="UniProtKB" id="P84078"/>
    </source>
</evidence>
<evidence type="ECO:0000250" key="3">
    <source>
        <dbReference type="UniProtKB" id="P84079"/>
    </source>
</evidence>
<evidence type="ECO:0000269" key="4">
    <source>
    </source>
</evidence>
<evidence type="ECO:0000269" key="5">
    <source>
    </source>
</evidence>
<evidence type="ECO:0000269" key="6">
    <source>
    </source>
</evidence>
<evidence type="ECO:0000269" key="7">
    <source>
    </source>
</evidence>
<evidence type="ECO:0000269" key="8">
    <source>
    </source>
</evidence>
<evidence type="ECO:0000305" key="9"/>
<evidence type="ECO:0007744" key="10">
    <source>
        <dbReference type="PDB" id="1R8Q"/>
    </source>
</evidence>
<evidence type="ECO:0007744" key="11">
    <source>
        <dbReference type="PDB" id="1R8S"/>
    </source>
</evidence>
<evidence type="ECO:0007744" key="12">
    <source>
        <dbReference type="PDB" id="1S9D"/>
    </source>
</evidence>
<evidence type="ECO:0007744" key="13">
    <source>
        <dbReference type="PDB" id="4C0A"/>
    </source>
</evidence>
<evidence type="ECO:0007829" key="14">
    <source>
        <dbReference type="PDB" id="1R8Q"/>
    </source>
</evidence>
<evidence type="ECO:0007829" key="15">
    <source>
        <dbReference type="PDB" id="1R8S"/>
    </source>
</evidence>
<comment type="function">
    <text evidence="1 3 7">Small GTPase involved in protein trafficking between different compartments (By similarity). Modulates vesicle budding and uncoating within the Golgi complex (By similarity). In its GTP-bound form, triggers the recruitment of coatomer proteins to the Golgi membrane (PubMed:8505331). The hydrolysis of ARF1-bound GTP, which is mediated by ARFGAPs proteins, is required for dissociation of coat proteins from Golgi membranes and vesicles (By similarity). The GTP-bound form interacts with PICK1 to limit PICK1-mediated inhibition of Arp2/3 complex activity; the function is linked to AMPA receptor (AMPAR) trafficking, regulation of synaptic plasticity of excitatory synapses and spine shrinkage during long-term depression (LTD) (By similarity). Plays a key role in the regulation of intestinal stem cells and gut microbiota, and is essential for maintaining intestinal homeostasis (By similarity). Also plays a critical role in mast cell expansion but not in mast cell maturation by facilitating optimal mTORC1 activation (By similarity).</text>
</comment>
<comment type="catalytic activity">
    <reaction evidence="1">
        <text>GTP + H2O = GDP + phosphate + H(+)</text>
        <dbReference type="Rhea" id="RHEA:19669"/>
        <dbReference type="ChEBI" id="CHEBI:15377"/>
        <dbReference type="ChEBI" id="CHEBI:15378"/>
        <dbReference type="ChEBI" id="CHEBI:37565"/>
        <dbReference type="ChEBI" id="CHEBI:43474"/>
        <dbReference type="ChEBI" id="CHEBI:58189"/>
        <dbReference type="EC" id="3.6.5.2"/>
    </reaction>
</comment>
<comment type="activity regulation">
    <text evidence="1">Alternates between an inactive GDP-bound form and an active GTP-bound form (By similarity). Activated by guanine nucleotide-exchange factors (GEFs) and inactivated by GTPase-activating proteins (GAPs) (By similarity).</text>
</comment>
<comment type="subunit">
    <text evidence="1 2 3 4 5 6">Interacts (when activated) with GGA1, GGA2 and GGA3; the interaction is required for proper subcellular location of GGA1, GGA2 and GGA3 (By similarity). Interacts with ARHGAP21, ASAP2, GGA1, HERC1, PRKCABP, PIP5K1B, TMED2, PSCD2, TMED10 and GRIA2 (PubMed:11703931, PubMed:14654833). Interacts with ARFGAP1, which hydrolyzes GTP and thus, regulates its function. Interacts with PI4KB in the Golgi complex. Interacts with NCS1/FREQ in the Golgi and at the plasma membrane. Interacts with PLEKHA3. Interacts with PLEKHA8; the interaction, together with phosphatidylinositol 4-phosphate binding, is required for FAPP2-mediated glucosylceramide transfer activity. Interacts (activated) with PICK1 (via PDZ domain); the interaction blocks Arp2/3 complex inhibition (By similarity). Interacts with IQSEC1 (PubMed:24058294). Interacts with C9orf72 (By similarity).</text>
</comment>
<comment type="interaction">
    <interactant intactId="EBI-449051">
        <id>P84080</id>
    </interactant>
    <interactant intactId="EBI-907774">
        <id>P62168</id>
        <label>Ncs1</label>
    </interactant>
    <organismsDiffer>true</organismsDiffer>
    <experiments>2</experiments>
</comment>
<comment type="subcellular location">
    <subcellularLocation>
        <location evidence="7">Golgi apparatus membrane</location>
        <topology evidence="7">Lipid-anchor</topology>
        <orientation evidence="9">Cytoplasmic side</orientation>
    </subcellularLocation>
    <subcellularLocation>
        <location evidence="3">Synapse</location>
        <location evidence="3">Synaptosome</location>
    </subcellularLocation>
    <subcellularLocation>
        <location evidence="3">Postsynaptic density</location>
    </subcellularLocation>
    <text evidence="8">In the GDP-bound form, associates transiently with the membranes via its myristoylated N-terminus where guanine nucleotide-exchange factor (GEF)-mediated nucleotide exchange occurs (PubMed:9109679). Following nucleotide exchange, the GTP-bound form undergoes a conformational change, leading to the exposure of a myristoylated N-terminal amphipathic helix that provides stable membrane anchorage (PubMed:9109679).</text>
</comment>
<comment type="similarity">
    <text evidence="9">Belongs to the small GTPase superfamily. Arf family.</text>
</comment>
<dbReference type="EC" id="3.6.5.2" evidence="1"/>
<dbReference type="EMBL" id="J03275">
    <property type="protein sequence ID" value="AAA30361.1"/>
    <property type="molecule type" value="mRNA"/>
</dbReference>
<dbReference type="EMBL" id="BC102874">
    <property type="protein sequence ID" value="AAI02875.1"/>
    <property type="molecule type" value="mRNA"/>
</dbReference>
<dbReference type="EMBL" id="BC140532">
    <property type="protein sequence ID" value="AAI40533.1"/>
    <property type="molecule type" value="mRNA"/>
</dbReference>
<dbReference type="PIR" id="A36167">
    <property type="entry name" value="A36167"/>
</dbReference>
<dbReference type="RefSeq" id="NP_788826.1">
    <property type="nucleotide sequence ID" value="NM_176653.4"/>
</dbReference>
<dbReference type="RefSeq" id="XP_005208456.1">
    <property type="nucleotide sequence ID" value="XM_005208399.5"/>
</dbReference>
<dbReference type="RefSeq" id="XP_005208457.1">
    <property type="nucleotide sequence ID" value="XM_005208400.5"/>
</dbReference>
<dbReference type="PDB" id="1R8Q">
    <property type="method" value="X-ray"/>
    <property type="resolution" value="1.86 A"/>
    <property type="chains" value="A/B=1-181"/>
</dbReference>
<dbReference type="PDB" id="1R8S">
    <property type="method" value="X-ray"/>
    <property type="resolution" value="1.46 A"/>
    <property type="chains" value="A=18-181"/>
</dbReference>
<dbReference type="PDB" id="1S9D">
    <property type="method" value="X-ray"/>
    <property type="resolution" value="1.80 A"/>
    <property type="chains" value="A=18-181"/>
</dbReference>
<dbReference type="PDB" id="4C0A">
    <property type="method" value="X-ray"/>
    <property type="resolution" value="3.30 A"/>
    <property type="chains" value="C/D/G/H=18-181"/>
</dbReference>
<dbReference type="PDBsum" id="1R8Q"/>
<dbReference type="PDBsum" id="1R8S"/>
<dbReference type="PDBsum" id="1S9D"/>
<dbReference type="PDBsum" id="4C0A"/>
<dbReference type="BMRB" id="P84080"/>
<dbReference type="SMR" id="P84080"/>
<dbReference type="BioGRID" id="160195">
    <property type="interactions" value="3"/>
</dbReference>
<dbReference type="FunCoup" id="P84080">
    <property type="interactions" value="4801"/>
</dbReference>
<dbReference type="IntAct" id="P84080">
    <property type="interactions" value="8"/>
</dbReference>
<dbReference type="MINT" id="P84080"/>
<dbReference type="STRING" id="9913.ENSBTAP00000010159"/>
<dbReference type="PaxDb" id="9913-ENSBTAP00000010159"/>
<dbReference type="PeptideAtlas" id="P84080"/>
<dbReference type="Ensembl" id="ENSBTAT00000010159.6">
    <property type="protein sequence ID" value="ENSBTAP00000010159.4"/>
    <property type="gene ID" value="ENSBTAG00000007725.6"/>
</dbReference>
<dbReference type="GeneID" id="338058"/>
<dbReference type="KEGG" id="bta:338058"/>
<dbReference type="CTD" id="375"/>
<dbReference type="VEuPathDB" id="HostDB:ENSBTAG00000007725"/>
<dbReference type="VGNC" id="VGNC:50209">
    <property type="gene designation" value="ARF1"/>
</dbReference>
<dbReference type="eggNOG" id="KOG0070">
    <property type="taxonomic scope" value="Eukaryota"/>
</dbReference>
<dbReference type="GeneTree" id="ENSGT00950000183080"/>
<dbReference type="HOGENOM" id="CLU_040729_9_3_1"/>
<dbReference type="InParanoid" id="P84080"/>
<dbReference type="OMA" id="HYYANTN"/>
<dbReference type="OrthoDB" id="2011769at2759"/>
<dbReference type="TreeFam" id="TF300808"/>
<dbReference type="Reactome" id="R-BTA-1660499">
    <property type="pathway name" value="Synthesis of PIPs at the plasma membrane"/>
</dbReference>
<dbReference type="Reactome" id="R-BTA-1660514">
    <property type="pathway name" value="Synthesis of PIPs at the Golgi membrane"/>
</dbReference>
<dbReference type="Reactome" id="R-BTA-199992">
    <property type="pathway name" value="trans-Golgi Network Vesicle Budding"/>
</dbReference>
<dbReference type="Reactome" id="R-BTA-2132295">
    <property type="pathway name" value="MHC class II antigen presentation"/>
</dbReference>
<dbReference type="Reactome" id="R-BTA-432720">
    <property type="pathway name" value="Lysosome Vesicle Biogenesis"/>
</dbReference>
<dbReference type="Reactome" id="R-BTA-432722">
    <property type="pathway name" value="Golgi Associated Vesicle Biogenesis"/>
</dbReference>
<dbReference type="Reactome" id="R-BTA-6807878">
    <property type="pathway name" value="COPI-mediated anterograde transport"/>
</dbReference>
<dbReference type="Reactome" id="R-BTA-6811434">
    <property type="pathway name" value="COPI-dependent Golgi-to-ER retrograde traffic"/>
</dbReference>
<dbReference type="Reactome" id="R-BTA-6811438">
    <property type="pathway name" value="Intra-Golgi traffic"/>
</dbReference>
<dbReference type="Reactome" id="R-BTA-9845576">
    <property type="pathway name" value="Glycosphingolipid transport"/>
</dbReference>
<dbReference type="EvolutionaryTrace" id="P84080"/>
<dbReference type="Proteomes" id="UP000009136">
    <property type="component" value="Chromosome 7"/>
</dbReference>
<dbReference type="Bgee" id="ENSBTAG00000007725">
    <property type="expression patterns" value="Expressed in thyroid gland and 105 other cell types or tissues"/>
</dbReference>
<dbReference type="GO" id="GO:0005737">
    <property type="term" value="C:cytoplasm"/>
    <property type="evidence" value="ECO:0000318"/>
    <property type="project" value="GO_Central"/>
</dbReference>
<dbReference type="GO" id="GO:0005829">
    <property type="term" value="C:cytosol"/>
    <property type="evidence" value="ECO:0000314"/>
    <property type="project" value="AgBase"/>
</dbReference>
<dbReference type="GO" id="GO:0005794">
    <property type="term" value="C:Golgi apparatus"/>
    <property type="evidence" value="ECO:0000314"/>
    <property type="project" value="AgBase"/>
</dbReference>
<dbReference type="GO" id="GO:0000139">
    <property type="term" value="C:Golgi membrane"/>
    <property type="evidence" value="ECO:0007669"/>
    <property type="project" value="UniProtKB-SubCell"/>
</dbReference>
<dbReference type="GO" id="GO:0043005">
    <property type="term" value="C:neuron projection"/>
    <property type="evidence" value="ECO:0007669"/>
    <property type="project" value="UniProtKB-KW"/>
</dbReference>
<dbReference type="GO" id="GO:0005886">
    <property type="term" value="C:plasma membrane"/>
    <property type="evidence" value="ECO:0000314"/>
    <property type="project" value="AgBase"/>
</dbReference>
<dbReference type="GO" id="GO:0014069">
    <property type="term" value="C:postsynaptic density"/>
    <property type="evidence" value="ECO:0007669"/>
    <property type="project" value="UniProtKB-SubCell"/>
</dbReference>
<dbReference type="GO" id="GO:0005525">
    <property type="term" value="F:GTP binding"/>
    <property type="evidence" value="ECO:0000318"/>
    <property type="project" value="GO_Central"/>
</dbReference>
<dbReference type="GO" id="GO:0003924">
    <property type="term" value="F:GTPase activity"/>
    <property type="evidence" value="ECO:0007669"/>
    <property type="project" value="InterPro"/>
</dbReference>
<dbReference type="GO" id="GO:0097061">
    <property type="term" value="P:dendritic spine organization"/>
    <property type="evidence" value="ECO:0000250"/>
    <property type="project" value="UniProtKB"/>
</dbReference>
<dbReference type="GO" id="GO:0006886">
    <property type="term" value="P:intracellular protein transport"/>
    <property type="evidence" value="ECO:0000318"/>
    <property type="project" value="GO_Central"/>
</dbReference>
<dbReference type="GO" id="GO:0060292">
    <property type="term" value="P:long-term synaptic depression"/>
    <property type="evidence" value="ECO:0000250"/>
    <property type="project" value="UniProtKB"/>
</dbReference>
<dbReference type="GO" id="GO:0034315">
    <property type="term" value="P:regulation of Arp2/3 complex-mediated actin nucleation"/>
    <property type="evidence" value="ECO:0000250"/>
    <property type="project" value="UniProtKB"/>
</dbReference>
<dbReference type="GO" id="GO:0002090">
    <property type="term" value="P:regulation of receptor internalization"/>
    <property type="evidence" value="ECO:0000250"/>
    <property type="project" value="UniProtKB"/>
</dbReference>
<dbReference type="GO" id="GO:0016192">
    <property type="term" value="P:vesicle-mediated transport"/>
    <property type="evidence" value="ECO:0000318"/>
    <property type="project" value="GO_Central"/>
</dbReference>
<dbReference type="CDD" id="cd04150">
    <property type="entry name" value="Arf1_5_like"/>
    <property type="match status" value="1"/>
</dbReference>
<dbReference type="FunFam" id="3.40.50.300:FF:003500">
    <property type="entry name" value="ADP-ribosylation factor 1"/>
    <property type="match status" value="1"/>
</dbReference>
<dbReference type="Gene3D" id="3.40.50.300">
    <property type="entry name" value="P-loop containing nucleotide triphosphate hydrolases"/>
    <property type="match status" value="1"/>
</dbReference>
<dbReference type="InterPro" id="IPR045872">
    <property type="entry name" value="Arf1-5-like"/>
</dbReference>
<dbReference type="InterPro" id="IPR027417">
    <property type="entry name" value="P-loop_NTPase"/>
</dbReference>
<dbReference type="InterPro" id="IPR005225">
    <property type="entry name" value="Small_GTP-bd"/>
</dbReference>
<dbReference type="InterPro" id="IPR024156">
    <property type="entry name" value="Small_GTPase_ARF"/>
</dbReference>
<dbReference type="InterPro" id="IPR006689">
    <property type="entry name" value="Small_GTPase_ARF/SAR"/>
</dbReference>
<dbReference type="NCBIfam" id="TIGR00231">
    <property type="entry name" value="small_GTP"/>
    <property type="match status" value="1"/>
</dbReference>
<dbReference type="PANTHER" id="PTHR11711">
    <property type="entry name" value="ADP RIBOSYLATION FACTOR-RELATED"/>
    <property type="match status" value="1"/>
</dbReference>
<dbReference type="Pfam" id="PF00025">
    <property type="entry name" value="Arf"/>
    <property type="match status" value="1"/>
</dbReference>
<dbReference type="PRINTS" id="PR00328">
    <property type="entry name" value="SAR1GTPBP"/>
</dbReference>
<dbReference type="SMART" id="SM00177">
    <property type="entry name" value="ARF"/>
    <property type="match status" value="1"/>
</dbReference>
<dbReference type="SMART" id="SM00175">
    <property type="entry name" value="RAB"/>
    <property type="match status" value="1"/>
</dbReference>
<dbReference type="SMART" id="SM00178">
    <property type="entry name" value="SAR"/>
    <property type="match status" value="1"/>
</dbReference>
<dbReference type="SUPFAM" id="SSF52540">
    <property type="entry name" value="P-loop containing nucleoside triphosphate hydrolases"/>
    <property type="match status" value="1"/>
</dbReference>
<dbReference type="PROSITE" id="PS51417">
    <property type="entry name" value="ARF"/>
    <property type="match status" value="1"/>
</dbReference>
<sequence length="181" mass="20697">MGNIFANLFKGLFGKKEMRILMVGLDAAGKTTILYKLKLGEIVTTIPTIGFNVETVEYKNISFTVWDVGGQDKIRPLWRHYFQNTQGLIFVVDSNDRERVNEAREELMRMLAEDELRDAVLLVFANKQDLPNAMNAAEITDKLGLHSLRHRNWYIQATCATSGDGLYEGLDWLSNQLRNQK</sequence>
<protein>
    <recommendedName>
        <fullName>ADP-ribosylation factor 1</fullName>
        <ecNumber evidence="1">3.6.5.2</ecNumber>
    </recommendedName>
</protein>
<proteinExistence type="evidence at protein level"/>
<keyword id="KW-0002">3D-structure</keyword>
<keyword id="KW-0007">Acetylation</keyword>
<keyword id="KW-0903">Direct protein sequencing</keyword>
<keyword id="KW-0931">ER-Golgi transport</keyword>
<keyword id="KW-0333">Golgi apparatus</keyword>
<keyword id="KW-0342">GTP-binding</keyword>
<keyword id="KW-0378">Hydrolase</keyword>
<keyword id="KW-0449">Lipoprotein</keyword>
<keyword id="KW-0472">Membrane</keyword>
<keyword id="KW-0519">Myristate</keyword>
<keyword id="KW-0547">Nucleotide-binding</keyword>
<keyword id="KW-0653">Protein transport</keyword>
<keyword id="KW-1185">Reference proteome</keyword>
<keyword id="KW-0770">Synapse</keyword>
<keyword id="KW-0771">Synaptosome</keyword>
<keyword id="KW-0813">Transport</keyword>
<organism>
    <name type="scientific">Bos taurus</name>
    <name type="common">Bovine</name>
    <dbReference type="NCBI Taxonomy" id="9913"/>
    <lineage>
        <taxon>Eukaryota</taxon>
        <taxon>Metazoa</taxon>
        <taxon>Chordata</taxon>
        <taxon>Craniata</taxon>
        <taxon>Vertebrata</taxon>
        <taxon>Euteleostomi</taxon>
        <taxon>Mammalia</taxon>
        <taxon>Eutheria</taxon>
        <taxon>Laurasiatheria</taxon>
        <taxon>Artiodactyla</taxon>
        <taxon>Ruminantia</taxon>
        <taxon>Pecora</taxon>
        <taxon>Bovidae</taxon>
        <taxon>Bovinae</taxon>
        <taxon>Bos</taxon>
    </lineage>
</organism>
<reference key="1">
    <citation type="journal article" date="1988" name="Proc. Natl. Acad. Sci. U.S.A.">
        <title>Sequences of the bovine and yeast ADP-ribosylation factor and comparison to other GTP-binding proteins.</title>
        <authorList>
            <person name="Sewell J."/>
            <person name="Kahn R.A."/>
        </authorList>
    </citation>
    <scope>NUCLEOTIDE SEQUENCE [MRNA]</scope>
    <scope>PARTIAL PROTEIN SEQUENCE</scope>
</reference>
<reference key="2">
    <citation type="submission" date="2007-04" db="EMBL/GenBank/DDBJ databases">
        <authorList>
            <consortium name="NIH - Mammalian Gene Collection (MGC) project"/>
        </authorList>
    </citation>
    <scope>NUCLEOTIDE SEQUENCE [LARGE SCALE MRNA]</scope>
    <source>
        <strain>Crossbred X Angus</strain>
        <strain>Hereford</strain>
        <tissue>Basal ganglia</tissue>
        <tissue>Ileum</tissue>
    </source>
</reference>
<reference key="3">
    <citation type="journal article" date="1993" name="J. Biol. Chem.">
        <title>Binding of coatomer to Golgi membranes requires ADP-ribosylation factor.</title>
        <authorList>
            <person name="Palmer D.J."/>
            <person name="Helms J.B."/>
            <person name="Beckers C.J."/>
            <person name="Orci L."/>
            <person name="Rothman J.E."/>
        </authorList>
    </citation>
    <scope>FUNCTION</scope>
    <scope>SUBCELLULAR LOCATION</scope>
</reference>
<reference key="4">
    <citation type="journal article" date="1997" name="Biochemistry">
        <title>N-terminal hydrophobic residues of the G-protein ADP-ribosylation factor-1 insert into membrane phospholipids upon GDP to GTP exchange.</title>
        <authorList>
            <person name="Antonny B."/>
            <person name="Beraud-Dufour S."/>
            <person name="Chardin P."/>
            <person name="Chabre M."/>
        </authorList>
    </citation>
    <scope>SUBCELLULAR LOCATION</scope>
    <scope>MYRISTOYLATION</scope>
</reference>
<reference key="5">
    <citation type="journal article" date="2001" name="Dev. Cell">
        <title>KDEL-cargo regulates interactions between proteins involved in COPI vesicle traffic: measurements in living cells using FRET.</title>
        <authorList>
            <person name="Majoul I."/>
            <person name="Straub M."/>
            <person name="Hell S.W."/>
            <person name="Duden R."/>
            <person name="Soling H.D."/>
        </authorList>
    </citation>
    <scope>INTERACTION WITH TMED2 AND TMED10</scope>
    <scope>MUTAGENESIS OF GLN-71</scope>
</reference>
<reference key="6">
    <citation type="journal article" date="2003" name="Nature">
        <title>Structural snapshots of the mechanism and inhibition of a guanine nucleotide exchange factor.</title>
        <authorList>
            <person name="Renault L."/>
            <person name="Guibert B."/>
            <person name="Cherfils J."/>
        </authorList>
    </citation>
    <scope>X-RAY CRYSTALLOGRAPHY (1.46 ANGSTROMS) IN COMPLEX WITH PSCD2; GDP AND BREFELDIN</scope>
</reference>
<reference key="7">
    <citation type="journal article" date="2013" name="PLoS Biol.">
        <title>Integrated conformational and lipid-sensing regulation of endosomal ArfGEF BRAG2.</title>
        <authorList>
            <person name="Aizel K."/>
            <person name="Biou V."/>
            <person name="Navaza J."/>
            <person name="Duarte L.V."/>
            <person name="Campanacci V."/>
            <person name="Cherfils J."/>
            <person name="Zeghouf M."/>
        </authorList>
    </citation>
    <scope>X-RAY CRYSTALLOGRAPHY (3.30 ANGSTROMS) OF 18-181 IN COMPLEX WITH GTP ANALOG AND IQSEC1</scope>
    <scope>INTERACTION WITH IQSEC1</scope>
</reference>
<name>ARF1_BOVIN</name>